<dbReference type="EC" id="2.7.7.4" evidence="2"/>
<dbReference type="EMBL" id="CP000789">
    <property type="protein sequence ID" value="ABU69768.1"/>
    <property type="molecule type" value="Genomic_DNA"/>
</dbReference>
<dbReference type="RefSeq" id="WP_005528550.1">
    <property type="nucleotide sequence ID" value="NC_022269.1"/>
</dbReference>
<dbReference type="SMR" id="A7MWE9"/>
<dbReference type="GeneID" id="83583086"/>
<dbReference type="KEGG" id="vha:VIBHAR_00767"/>
<dbReference type="PATRIC" id="fig|338187.25.peg.1847"/>
<dbReference type="UniPathway" id="UPA00140">
    <property type="reaction ID" value="UER00204"/>
</dbReference>
<dbReference type="Proteomes" id="UP000008152">
    <property type="component" value="Chromosome I"/>
</dbReference>
<dbReference type="GO" id="GO:0005524">
    <property type="term" value="F:ATP binding"/>
    <property type="evidence" value="ECO:0007669"/>
    <property type="project" value="UniProtKB-KW"/>
</dbReference>
<dbReference type="GO" id="GO:0005525">
    <property type="term" value="F:GTP binding"/>
    <property type="evidence" value="ECO:0007669"/>
    <property type="project" value="UniProtKB-UniRule"/>
</dbReference>
<dbReference type="GO" id="GO:0003924">
    <property type="term" value="F:GTPase activity"/>
    <property type="evidence" value="ECO:0007669"/>
    <property type="project" value="InterPro"/>
</dbReference>
<dbReference type="GO" id="GO:0097216">
    <property type="term" value="F:guanosine tetraphosphate binding"/>
    <property type="evidence" value="ECO:0007669"/>
    <property type="project" value="UniProtKB-ARBA"/>
</dbReference>
<dbReference type="GO" id="GO:0004781">
    <property type="term" value="F:sulfate adenylyltransferase (ATP) activity"/>
    <property type="evidence" value="ECO:0007669"/>
    <property type="project" value="UniProtKB-UniRule"/>
</dbReference>
<dbReference type="GO" id="GO:0070814">
    <property type="term" value="P:hydrogen sulfide biosynthetic process"/>
    <property type="evidence" value="ECO:0007669"/>
    <property type="project" value="UniProtKB-UniRule"/>
</dbReference>
<dbReference type="GO" id="GO:0000103">
    <property type="term" value="P:sulfate assimilation"/>
    <property type="evidence" value="ECO:0007669"/>
    <property type="project" value="UniProtKB-UniRule"/>
</dbReference>
<dbReference type="CDD" id="cd04166">
    <property type="entry name" value="CysN_ATPS"/>
    <property type="match status" value="1"/>
</dbReference>
<dbReference type="CDD" id="cd03695">
    <property type="entry name" value="CysN_NodQ_II"/>
    <property type="match status" value="1"/>
</dbReference>
<dbReference type="CDD" id="cd04095">
    <property type="entry name" value="CysN_NoDQ_III"/>
    <property type="match status" value="1"/>
</dbReference>
<dbReference type="FunFam" id="2.40.30.10:FF:000027">
    <property type="entry name" value="Sulfate adenylyltransferase subunit 1"/>
    <property type="match status" value="1"/>
</dbReference>
<dbReference type="FunFam" id="2.40.30.10:FF:000031">
    <property type="entry name" value="Sulfate adenylyltransferase subunit 1"/>
    <property type="match status" value="1"/>
</dbReference>
<dbReference type="FunFam" id="3.40.50.300:FF:000119">
    <property type="entry name" value="Sulfate adenylyltransferase subunit 1"/>
    <property type="match status" value="1"/>
</dbReference>
<dbReference type="Gene3D" id="3.40.50.300">
    <property type="entry name" value="P-loop containing nucleotide triphosphate hydrolases"/>
    <property type="match status" value="1"/>
</dbReference>
<dbReference type="Gene3D" id="2.40.30.10">
    <property type="entry name" value="Translation factors"/>
    <property type="match status" value="2"/>
</dbReference>
<dbReference type="HAMAP" id="MF_00062">
    <property type="entry name" value="Sulf_adenylyltr_sub1"/>
    <property type="match status" value="1"/>
</dbReference>
<dbReference type="InterPro" id="IPR041757">
    <property type="entry name" value="CysN_GTP-bd"/>
</dbReference>
<dbReference type="InterPro" id="IPR044138">
    <property type="entry name" value="CysN_II"/>
</dbReference>
<dbReference type="InterPro" id="IPR044139">
    <property type="entry name" value="CysN_NoDQ_III"/>
</dbReference>
<dbReference type="InterPro" id="IPR004161">
    <property type="entry name" value="EFTu-like_2"/>
</dbReference>
<dbReference type="InterPro" id="IPR031157">
    <property type="entry name" value="G_TR_CS"/>
</dbReference>
<dbReference type="InterPro" id="IPR054696">
    <property type="entry name" value="GTP-eEF1A_C"/>
</dbReference>
<dbReference type="InterPro" id="IPR027417">
    <property type="entry name" value="P-loop_NTPase"/>
</dbReference>
<dbReference type="InterPro" id="IPR005225">
    <property type="entry name" value="Small_GTP-bd"/>
</dbReference>
<dbReference type="InterPro" id="IPR011779">
    <property type="entry name" value="SO4_adenylTrfase_lsu"/>
</dbReference>
<dbReference type="InterPro" id="IPR000795">
    <property type="entry name" value="T_Tr_GTP-bd_dom"/>
</dbReference>
<dbReference type="InterPro" id="IPR050100">
    <property type="entry name" value="TRAFAC_GTPase_members"/>
</dbReference>
<dbReference type="InterPro" id="IPR009000">
    <property type="entry name" value="Transl_B-barrel_sf"/>
</dbReference>
<dbReference type="InterPro" id="IPR009001">
    <property type="entry name" value="Transl_elong_EF1A/Init_IF2_C"/>
</dbReference>
<dbReference type="NCBIfam" id="TIGR02034">
    <property type="entry name" value="CysN"/>
    <property type="match status" value="1"/>
</dbReference>
<dbReference type="NCBIfam" id="NF003478">
    <property type="entry name" value="PRK05124.1"/>
    <property type="match status" value="1"/>
</dbReference>
<dbReference type="NCBIfam" id="TIGR00231">
    <property type="entry name" value="small_GTP"/>
    <property type="match status" value="1"/>
</dbReference>
<dbReference type="PANTHER" id="PTHR23115">
    <property type="entry name" value="TRANSLATION FACTOR"/>
    <property type="match status" value="1"/>
</dbReference>
<dbReference type="Pfam" id="PF22594">
    <property type="entry name" value="GTP-eEF1A_C"/>
    <property type="match status" value="1"/>
</dbReference>
<dbReference type="Pfam" id="PF00009">
    <property type="entry name" value="GTP_EFTU"/>
    <property type="match status" value="1"/>
</dbReference>
<dbReference type="Pfam" id="PF03144">
    <property type="entry name" value="GTP_EFTU_D2"/>
    <property type="match status" value="1"/>
</dbReference>
<dbReference type="PRINTS" id="PR00315">
    <property type="entry name" value="ELONGATNFCT"/>
</dbReference>
<dbReference type="SUPFAM" id="SSF50465">
    <property type="entry name" value="EF-Tu/eEF-1alpha/eIF2-gamma C-terminal domain"/>
    <property type="match status" value="1"/>
</dbReference>
<dbReference type="SUPFAM" id="SSF52540">
    <property type="entry name" value="P-loop containing nucleoside triphosphate hydrolases"/>
    <property type="match status" value="1"/>
</dbReference>
<dbReference type="SUPFAM" id="SSF50447">
    <property type="entry name" value="Translation proteins"/>
    <property type="match status" value="1"/>
</dbReference>
<dbReference type="PROSITE" id="PS00301">
    <property type="entry name" value="G_TR_1"/>
    <property type="match status" value="1"/>
</dbReference>
<dbReference type="PROSITE" id="PS51722">
    <property type="entry name" value="G_TR_2"/>
    <property type="match status" value="1"/>
</dbReference>
<reference key="1">
    <citation type="submission" date="2007-08" db="EMBL/GenBank/DDBJ databases">
        <authorList>
            <consortium name="The Vibrio harveyi Genome Sequencing Project"/>
            <person name="Bassler B."/>
            <person name="Clifton S.W."/>
            <person name="Fulton L."/>
            <person name="Delehaunty K."/>
            <person name="Fronick C."/>
            <person name="Harrison M."/>
            <person name="Markivic C."/>
            <person name="Fulton R."/>
            <person name="Tin-Wollam A.-M."/>
            <person name="Shah N."/>
            <person name="Pepin K."/>
            <person name="Nash W."/>
            <person name="Thiruvilangam P."/>
            <person name="Bhonagiri V."/>
            <person name="Waters C."/>
            <person name="Tu K.C."/>
            <person name="Irgon J."/>
            <person name="Wilson R.K."/>
        </authorList>
    </citation>
    <scope>NUCLEOTIDE SEQUENCE [LARGE SCALE GENOMIC DNA]</scope>
    <source>
        <strain>ATCC BAA-1116 / BB120</strain>
    </source>
</reference>
<name>CYSN_VIBC1</name>
<comment type="function">
    <text evidence="2">With CysD forms the ATP sulfurylase (ATPS) that catalyzes the adenylation of sulfate producing adenosine 5'-phosphosulfate (APS) and diphosphate, the first enzymatic step in sulfur assimilation pathway. APS synthesis involves the formation of a high-energy phosphoric-sulfuric acid anhydride bond driven by GTP hydrolysis by CysN coupled to ATP hydrolysis by CysD.</text>
</comment>
<comment type="catalytic activity">
    <reaction evidence="2">
        <text>sulfate + ATP + H(+) = adenosine 5'-phosphosulfate + diphosphate</text>
        <dbReference type="Rhea" id="RHEA:18133"/>
        <dbReference type="ChEBI" id="CHEBI:15378"/>
        <dbReference type="ChEBI" id="CHEBI:16189"/>
        <dbReference type="ChEBI" id="CHEBI:30616"/>
        <dbReference type="ChEBI" id="CHEBI:33019"/>
        <dbReference type="ChEBI" id="CHEBI:58243"/>
        <dbReference type="EC" id="2.7.7.4"/>
    </reaction>
</comment>
<comment type="pathway">
    <text evidence="2">Sulfur metabolism; hydrogen sulfide biosynthesis; sulfite from sulfate: step 1/3.</text>
</comment>
<comment type="subunit">
    <text evidence="2">Heterodimer composed of CysD, the smaller subunit, and CysN.</text>
</comment>
<comment type="similarity">
    <text evidence="2">Belongs to the TRAFAC class translation factor GTPase superfamily. Classic translation factor GTPase family. CysN/NodQ subfamily.</text>
</comment>
<sequence length="476" mass="52483">MNSAVEAQLAELGIEGYLKQHQYKSLLRFLTCGSVDDGKSTLIGRLLHDSKQIYEDQLAAVHSDSQRVGTTGEKPDLALLVDGLQAEREQGITIDVAYRYFSTQKRKFIIADTPGHEQYTRNMATGASTCDLAVILVDARKGVLDQTRRHSFISNLLGLKHFVVAINKMDLVDYSQERFEEIRDEYLQFSENLAGETDIQIIPLSALEGDNVVEKGQNLSWFEGPSLLELLETVDVDHEKGEGDFRFPVQYVNRPNLDFRGFAGTISSGSVKVGDAIKALPSGKTSTVARIVTFDGDVQEAQAGLAVTLTLNDEIDISRGDLLVLENAQVESTNHLLADVVWMTEQPLQPGRDYDIKIAGKKTVGHVEAIRHQYDINNLSTHGAAELPLNGIGLCEWSLNESVALDNYQDCADTGGFIIIDRLTNVTVGAGMVKESLAAVERGLADVSAFELELNALVRKHFPHWEAKDLSQLLKK</sequence>
<gene>
    <name evidence="2" type="primary">cysN</name>
    <name type="ordered locus">VIBHAR_00767</name>
</gene>
<evidence type="ECO:0000250" key="1"/>
<evidence type="ECO:0000255" key="2">
    <source>
        <dbReference type="HAMAP-Rule" id="MF_00062"/>
    </source>
</evidence>
<accession>A7MWE9</accession>
<proteinExistence type="inferred from homology"/>
<feature type="chain" id="PRO_1000008913" description="Sulfate adenylyltransferase subunit 1">
    <location>
        <begin position="1"/>
        <end position="476"/>
    </location>
</feature>
<feature type="domain" description="tr-type G">
    <location>
        <begin position="24"/>
        <end position="239"/>
    </location>
</feature>
<feature type="region of interest" description="G1" evidence="1">
    <location>
        <begin position="33"/>
        <end position="40"/>
    </location>
</feature>
<feature type="region of interest" description="G2" evidence="1">
    <location>
        <begin position="91"/>
        <end position="95"/>
    </location>
</feature>
<feature type="region of interest" description="G3" evidence="1">
    <location>
        <begin position="112"/>
        <end position="115"/>
    </location>
</feature>
<feature type="region of interest" description="G4" evidence="1">
    <location>
        <begin position="167"/>
        <end position="170"/>
    </location>
</feature>
<feature type="region of interest" description="G5" evidence="1">
    <location>
        <begin position="205"/>
        <end position="207"/>
    </location>
</feature>
<feature type="binding site" evidence="2">
    <location>
        <begin position="33"/>
        <end position="40"/>
    </location>
    <ligand>
        <name>GTP</name>
        <dbReference type="ChEBI" id="CHEBI:37565"/>
    </ligand>
</feature>
<feature type="binding site" evidence="2">
    <location>
        <begin position="112"/>
        <end position="116"/>
    </location>
    <ligand>
        <name>GTP</name>
        <dbReference type="ChEBI" id="CHEBI:37565"/>
    </ligand>
</feature>
<feature type="binding site" evidence="2">
    <location>
        <begin position="167"/>
        <end position="170"/>
    </location>
    <ligand>
        <name>GTP</name>
        <dbReference type="ChEBI" id="CHEBI:37565"/>
    </ligand>
</feature>
<organism>
    <name type="scientific">Vibrio campbellii (strain ATCC BAA-1116)</name>
    <dbReference type="NCBI Taxonomy" id="2902295"/>
    <lineage>
        <taxon>Bacteria</taxon>
        <taxon>Pseudomonadati</taxon>
        <taxon>Pseudomonadota</taxon>
        <taxon>Gammaproteobacteria</taxon>
        <taxon>Vibrionales</taxon>
        <taxon>Vibrionaceae</taxon>
        <taxon>Vibrio</taxon>
    </lineage>
</organism>
<keyword id="KW-0067">ATP-binding</keyword>
<keyword id="KW-0342">GTP-binding</keyword>
<keyword id="KW-0547">Nucleotide-binding</keyword>
<keyword id="KW-0548">Nucleotidyltransferase</keyword>
<keyword id="KW-0808">Transferase</keyword>
<protein>
    <recommendedName>
        <fullName evidence="2">Sulfate adenylyltransferase subunit 1</fullName>
        <ecNumber evidence="2">2.7.7.4</ecNumber>
    </recommendedName>
    <alternativeName>
        <fullName evidence="2">ATP-sulfurylase large subunit</fullName>
    </alternativeName>
    <alternativeName>
        <fullName evidence="2">Sulfate adenylate transferase</fullName>
        <shortName evidence="2">SAT</shortName>
    </alternativeName>
</protein>